<feature type="chain" id="PRO_1000186088" description="tRNA 2-selenouridine synthase">
    <location>
        <begin position="1"/>
        <end position="368"/>
    </location>
</feature>
<feature type="domain" description="Rhodanese" evidence="1">
    <location>
        <begin position="15"/>
        <end position="138"/>
    </location>
</feature>
<feature type="active site" description="S-selanylcysteine intermediate" evidence="1">
    <location>
        <position position="98"/>
    </location>
</feature>
<comment type="function">
    <text evidence="1">Involved in the post-transcriptional modification of the uridine at the wobble position (U34) of tRNA(Lys), tRNA(Glu) and tRNA(Gln). Catalyzes the conversion of 2-thiouridine (S2U-RNA) to 2-selenouridine (Se2U-RNA). Acts in a two-step process involving geranylation of 2-thiouridine (S2U) to S-geranyl-2-thiouridine (geS2U) and subsequent selenation of the latter derivative to 2-selenouridine (Se2U) in the tRNA chain.</text>
</comment>
<comment type="catalytic activity">
    <reaction evidence="1">
        <text>5-methylaminomethyl-2-thiouridine(34) in tRNA + selenophosphate + (2E)-geranyl diphosphate + H2O + H(+) = 5-methylaminomethyl-2-selenouridine(34) in tRNA + (2E)-thiogeraniol + phosphate + diphosphate</text>
        <dbReference type="Rhea" id="RHEA:42716"/>
        <dbReference type="Rhea" id="RHEA-COMP:10195"/>
        <dbReference type="Rhea" id="RHEA-COMP:10196"/>
        <dbReference type="ChEBI" id="CHEBI:15377"/>
        <dbReference type="ChEBI" id="CHEBI:15378"/>
        <dbReference type="ChEBI" id="CHEBI:16144"/>
        <dbReference type="ChEBI" id="CHEBI:33019"/>
        <dbReference type="ChEBI" id="CHEBI:43474"/>
        <dbReference type="ChEBI" id="CHEBI:58057"/>
        <dbReference type="ChEBI" id="CHEBI:74455"/>
        <dbReference type="ChEBI" id="CHEBI:82743"/>
        <dbReference type="ChEBI" id="CHEBI:143703"/>
        <dbReference type="EC" id="2.9.1.3"/>
    </reaction>
    <physiologicalReaction direction="left-to-right" evidence="1">
        <dbReference type="Rhea" id="RHEA:42717"/>
    </physiologicalReaction>
</comment>
<comment type="catalytic activity">
    <reaction evidence="1">
        <text>5-methylaminomethyl-2-thiouridine(34) in tRNA + (2E)-geranyl diphosphate = 5-methylaminomethyl-S-(2E)-geranyl-thiouridine(34) in tRNA + diphosphate</text>
        <dbReference type="Rhea" id="RHEA:14085"/>
        <dbReference type="Rhea" id="RHEA-COMP:10195"/>
        <dbReference type="Rhea" id="RHEA-COMP:14654"/>
        <dbReference type="ChEBI" id="CHEBI:33019"/>
        <dbReference type="ChEBI" id="CHEBI:58057"/>
        <dbReference type="ChEBI" id="CHEBI:74455"/>
        <dbReference type="ChEBI" id="CHEBI:140632"/>
    </reaction>
    <physiologicalReaction direction="left-to-right" evidence="1">
        <dbReference type="Rhea" id="RHEA:14086"/>
    </physiologicalReaction>
</comment>
<comment type="catalytic activity">
    <reaction evidence="1">
        <text>5-methylaminomethyl-S-(2E)-geranyl-thiouridine(34) in tRNA + selenophosphate + H(+) = 5-methylaminomethyl-2-(Se-phospho)selenouridine(34) in tRNA + (2E)-thiogeraniol</text>
        <dbReference type="Rhea" id="RHEA:60172"/>
        <dbReference type="Rhea" id="RHEA-COMP:14654"/>
        <dbReference type="Rhea" id="RHEA-COMP:15523"/>
        <dbReference type="ChEBI" id="CHEBI:15378"/>
        <dbReference type="ChEBI" id="CHEBI:16144"/>
        <dbReference type="ChEBI" id="CHEBI:140632"/>
        <dbReference type="ChEBI" id="CHEBI:143702"/>
        <dbReference type="ChEBI" id="CHEBI:143703"/>
    </reaction>
    <physiologicalReaction direction="left-to-right" evidence="1">
        <dbReference type="Rhea" id="RHEA:60173"/>
    </physiologicalReaction>
</comment>
<comment type="catalytic activity">
    <reaction evidence="1">
        <text>5-methylaminomethyl-2-(Se-phospho)selenouridine(34) in tRNA + H2O = 5-methylaminomethyl-2-selenouridine(34) in tRNA + phosphate</text>
        <dbReference type="Rhea" id="RHEA:60176"/>
        <dbReference type="Rhea" id="RHEA-COMP:10196"/>
        <dbReference type="Rhea" id="RHEA-COMP:15523"/>
        <dbReference type="ChEBI" id="CHEBI:15377"/>
        <dbReference type="ChEBI" id="CHEBI:43474"/>
        <dbReference type="ChEBI" id="CHEBI:82743"/>
        <dbReference type="ChEBI" id="CHEBI:143702"/>
    </reaction>
    <physiologicalReaction direction="left-to-right" evidence="1">
        <dbReference type="Rhea" id="RHEA:60177"/>
    </physiologicalReaction>
</comment>
<comment type="subunit">
    <text evidence="1">Monomer.</text>
</comment>
<comment type="similarity">
    <text evidence="1">Belongs to the SelU family.</text>
</comment>
<gene>
    <name evidence="1" type="primary">selU</name>
    <name type="ordered locus">Sbal223_4081</name>
</gene>
<protein>
    <recommendedName>
        <fullName evidence="1">tRNA 2-selenouridine synthase</fullName>
        <ecNumber evidence="1">2.9.1.3</ecNumber>
    </recommendedName>
</protein>
<evidence type="ECO:0000255" key="1">
    <source>
        <dbReference type="HAMAP-Rule" id="MF_01622"/>
    </source>
</evidence>
<sequence>MPNAIVAAEQYREIFLNQHPIMDVRAPIEFTRGAFPNSTNLPLMLDSEREKVGTCYKQSGQQAAIALGHSLVNGPIKQQRIEAWASYVKANPNAYLYCFRGGLRSQLTQQWLKEACVEVPYIQGGYKALRQYLIGVIEAAPTQQPLLSLSGMTGCGKTDFLLQRKEAVDLEGIANHRGSSFGKNIDPQPTQINFENQLAIALLQHQTSDAACLLLEDESFLIGRSALPQTFYNAMQAANVLVLEESDDARLERLRNEYVHKMYSGFCERLGAEAGFAAFSDYLLQSLVSIRKRLGGKQHQELQDLMQQALDQQINQNDTSLHLVWINLLLHKYYDPMYLYQLEKKSERVLFKGSHQAMHEWLDSYQTR</sequence>
<accession>B8EBN0</accession>
<organism>
    <name type="scientific">Shewanella baltica (strain OS223)</name>
    <dbReference type="NCBI Taxonomy" id="407976"/>
    <lineage>
        <taxon>Bacteria</taxon>
        <taxon>Pseudomonadati</taxon>
        <taxon>Pseudomonadota</taxon>
        <taxon>Gammaproteobacteria</taxon>
        <taxon>Alteromonadales</taxon>
        <taxon>Shewanellaceae</taxon>
        <taxon>Shewanella</taxon>
    </lineage>
</organism>
<name>SELU_SHEB2</name>
<dbReference type="EC" id="2.9.1.3" evidence="1"/>
<dbReference type="EMBL" id="CP001252">
    <property type="protein sequence ID" value="ACK48554.1"/>
    <property type="molecule type" value="Genomic_DNA"/>
</dbReference>
<dbReference type="RefSeq" id="WP_012588815.1">
    <property type="nucleotide sequence ID" value="NC_011663.1"/>
</dbReference>
<dbReference type="SMR" id="B8EBN0"/>
<dbReference type="KEGG" id="sbp:Sbal223_4081"/>
<dbReference type="HOGENOM" id="CLU_043456_1_0_6"/>
<dbReference type="Proteomes" id="UP000002507">
    <property type="component" value="Chromosome"/>
</dbReference>
<dbReference type="GO" id="GO:0016765">
    <property type="term" value="F:transferase activity, transferring alkyl or aryl (other than methyl) groups"/>
    <property type="evidence" value="ECO:0007669"/>
    <property type="project" value="UniProtKB-UniRule"/>
</dbReference>
<dbReference type="GO" id="GO:0043828">
    <property type="term" value="F:tRNA 2-selenouridine synthase activity"/>
    <property type="evidence" value="ECO:0007669"/>
    <property type="project" value="UniProtKB-EC"/>
</dbReference>
<dbReference type="GO" id="GO:0002098">
    <property type="term" value="P:tRNA wobble uridine modification"/>
    <property type="evidence" value="ECO:0007669"/>
    <property type="project" value="UniProtKB-UniRule"/>
</dbReference>
<dbReference type="Gene3D" id="3.40.250.10">
    <property type="entry name" value="Rhodanese-like domain"/>
    <property type="match status" value="1"/>
</dbReference>
<dbReference type="HAMAP" id="MF_01622">
    <property type="entry name" value="tRNA_sel_U_synth"/>
    <property type="match status" value="1"/>
</dbReference>
<dbReference type="InterPro" id="IPR001763">
    <property type="entry name" value="Rhodanese-like_dom"/>
</dbReference>
<dbReference type="InterPro" id="IPR036873">
    <property type="entry name" value="Rhodanese-like_dom_sf"/>
</dbReference>
<dbReference type="InterPro" id="IPR017582">
    <property type="entry name" value="SelU"/>
</dbReference>
<dbReference type="NCBIfam" id="NF008750">
    <property type="entry name" value="PRK11784.1-2"/>
    <property type="match status" value="1"/>
</dbReference>
<dbReference type="NCBIfam" id="NF008751">
    <property type="entry name" value="PRK11784.1-3"/>
    <property type="match status" value="1"/>
</dbReference>
<dbReference type="NCBIfam" id="TIGR03167">
    <property type="entry name" value="tRNA_sel_U_synt"/>
    <property type="match status" value="1"/>
</dbReference>
<dbReference type="PANTHER" id="PTHR30401">
    <property type="entry name" value="TRNA 2-SELENOURIDINE SYNTHASE"/>
    <property type="match status" value="1"/>
</dbReference>
<dbReference type="PANTHER" id="PTHR30401:SF0">
    <property type="entry name" value="TRNA 2-SELENOURIDINE SYNTHASE"/>
    <property type="match status" value="1"/>
</dbReference>
<dbReference type="SMART" id="SM00450">
    <property type="entry name" value="RHOD"/>
    <property type="match status" value="1"/>
</dbReference>
<dbReference type="SUPFAM" id="SSF52821">
    <property type="entry name" value="Rhodanese/Cell cycle control phosphatase"/>
    <property type="match status" value="1"/>
</dbReference>
<dbReference type="PROSITE" id="PS50206">
    <property type="entry name" value="RHODANESE_3"/>
    <property type="match status" value="1"/>
</dbReference>
<proteinExistence type="inferred from homology"/>
<keyword id="KW-0711">Selenium</keyword>
<keyword id="KW-0808">Transferase</keyword>
<reference key="1">
    <citation type="submission" date="2008-12" db="EMBL/GenBank/DDBJ databases">
        <title>Complete sequence of chromosome of Shewanella baltica OS223.</title>
        <authorList>
            <consortium name="US DOE Joint Genome Institute"/>
            <person name="Lucas S."/>
            <person name="Copeland A."/>
            <person name="Lapidus A."/>
            <person name="Glavina del Rio T."/>
            <person name="Dalin E."/>
            <person name="Tice H."/>
            <person name="Bruce D."/>
            <person name="Goodwin L."/>
            <person name="Pitluck S."/>
            <person name="Chertkov O."/>
            <person name="Meincke L."/>
            <person name="Brettin T."/>
            <person name="Detter J.C."/>
            <person name="Han C."/>
            <person name="Kuske C.R."/>
            <person name="Larimer F."/>
            <person name="Land M."/>
            <person name="Hauser L."/>
            <person name="Kyrpides N."/>
            <person name="Ovchinnikova G."/>
            <person name="Brettar I."/>
            <person name="Rodrigues J."/>
            <person name="Konstantinidis K."/>
            <person name="Tiedje J."/>
        </authorList>
    </citation>
    <scope>NUCLEOTIDE SEQUENCE [LARGE SCALE GENOMIC DNA]</scope>
    <source>
        <strain>OS223</strain>
    </source>
</reference>